<organism>
    <name type="scientific">Influenza A virus (strain A/Turkey/Ontario/7732/1966 H5N9)</name>
    <dbReference type="NCBI Taxonomy" id="380301"/>
    <lineage>
        <taxon>Viruses</taxon>
        <taxon>Riboviria</taxon>
        <taxon>Orthornavirae</taxon>
        <taxon>Negarnaviricota</taxon>
        <taxon>Polyploviricotina</taxon>
        <taxon>Insthoviricetes</taxon>
        <taxon>Articulavirales</taxon>
        <taxon>Orthomyxoviridae</taxon>
        <taxon>Alphainfluenzavirus</taxon>
        <taxon>Alphainfluenzavirus influenzae</taxon>
        <taxon>Influenza A virus</taxon>
    </lineage>
</organism>
<organismHost>
    <name type="scientific">Aves</name>
    <dbReference type="NCBI Taxonomy" id="8782"/>
</organismHost>
<evidence type="ECO:0000255" key="1">
    <source>
        <dbReference type="HAMAP-Rule" id="MF_04062"/>
    </source>
</evidence>
<gene>
    <name evidence="1" type="primary">PB2</name>
</gene>
<sequence length="759" mass="85863">MERIKELRDLMSQSRTREILTKTTVDHMAIIKKYTSGRQEKNPALRMKWMMAMKYPITADKRIMEMIPERNEQGQTLWSKTNDAGSDRVMVSPLAITWWNRNGQTTSTVHYPKVYKTYFEKVERLKHGTFGPVHFRNQVKIRRRVDINPGHADLSAKEAQDVIMEVVFPNEVGARILTSESQLTITKEKKEELQDCKIAPLMVAYMLERELVRKTRFLPVAGGTSSVYIEVLHLTQGTCWEQMYTPGGEVRNDDVDQSLIIAARNIVRRATVSADPLASLLEMCHSTQIGGIRMVDILRQNPTEEQAVDICKAAMGLRISSSFSFGGFTFKRTSGSSVKREEEVLTGNLQTLKIRVHEGYEEFTMVGRRATAILRKATRRLIQLIVSGRDEQSIAEAIIVAMVFSQEDCMIKAVRGDLNFVNRANQRLNPMHQLLRHFQKDAKVLFQNWGIEPIDNVMGMIGILPDMTPSTGMSLRGVRVSKMGVDEYSSTERVVVSIDRFLRVRDQRGNVLLSPEEVSEAQGTEKLTITYSSSMMWEINGPESVLVNTYQWIIRNWETVKIQWSQDPTMLYNKMEFEPFQSLVPKAARGQYSGFVRTLFQQMRDVLGTFDTVQIIKLLPFAAAPPEQSRMQFSSLTVNVRGSGMRILVRGNSPVFNYNKATKRLTVLGKDAGALIEDPDEGTAGVESAVLRGFLILGKEDKRYGPALSINELSNLAKGEKANVLIGQGDVVLVMKRKRDSSILTDSQTATKRIRMAIN</sequence>
<reference key="1">
    <citation type="journal article" date="2006" name="Science">
        <title>Large-scale sequence analysis of avian influenza isolates.</title>
        <authorList>
            <person name="Obenauer J.C."/>
            <person name="Denson J."/>
            <person name="Mehta P.K."/>
            <person name="Su X."/>
            <person name="Mukatira S."/>
            <person name="Finkelstein D.B."/>
            <person name="Xu X."/>
            <person name="Wang J."/>
            <person name="Ma J."/>
            <person name="Fan Y."/>
            <person name="Rakestraw K.M."/>
            <person name="Webster R.G."/>
            <person name="Hoffmann E."/>
            <person name="Krauss S."/>
            <person name="Zheng J."/>
            <person name="Zhang Z."/>
            <person name="Naeve C.W."/>
        </authorList>
    </citation>
    <scope>NUCLEOTIDE SEQUENCE [GENOMIC RNA]</scope>
</reference>
<protein>
    <recommendedName>
        <fullName evidence="1">Polymerase basic protein 2</fullName>
    </recommendedName>
    <alternativeName>
        <fullName evidence="1">RNA-directed RNA polymerase subunit P3</fullName>
    </alternativeName>
</protein>
<comment type="function">
    <text evidence="1">Plays an essential role in transcription initiation and cap-stealing mechanism, in which cellular capped pre-mRNAs are used to generate primers for viral transcription. Recognizes and binds the 7-methylguanosine-containing cap of the target pre-RNA which is subsequently cleaved after 10-13 nucleotides by the viral protein PA. Plays a role in the initiation of the viral genome replication and modulates the activity of the ribonucleoprotein (RNP) complex.</text>
</comment>
<comment type="subunit">
    <text evidence="1">Influenza RNA polymerase is composed of three subunits: PB1, PB2 and PA. Interacts (via N-terminus) with PB1 (via C-terminus). Interacts with nucleoprotein NP (via N-terminus).</text>
</comment>
<comment type="subcellular location">
    <subcellularLocation>
        <location evidence="1">Virion</location>
    </subcellularLocation>
    <subcellularLocation>
        <location evidence="1">Host nucleus</location>
    </subcellularLocation>
</comment>
<comment type="similarity">
    <text evidence="1">Belongs to the influenza viruses PB2 family.</text>
</comment>
<dbReference type="EMBL" id="CY015108">
    <property type="protein sequence ID" value="ABI85145.1"/>
    <property type="molecule type" value="Genomic_RNA"/>
</dbReference>
<dbReference type="SMR" id="Q0A2D7"/>
<dbReference type="GO" id="GO:0042025">
    <property type="term" value="C:host cell nucleus"/>
    <property type="evidence" value="ECO:0007669"/>
    <property type="project" value="UniProtKB-SubCell"/>
</dbReference>
<dbReference type="GO" id="GO:0044423">
    <property type="term" value="C:virion component"/>
    <property type="evidence" value="ECO:0007669"/>
    <property type="project" value="UniProtKB-UniRule"/>
</dbReference>
<dbReference type="GO" id="GO:0003723">
    <property type="term" value="F:RNA binding"/>
    <property type="evidence" value="ECO:0007669"/>
    <property type="project" value="UniProtKB-UniRule"/>
</dbReference>
<dbReference type="GO" id="GO:0003968">
    <property type="term" value="F:RNA-directed RNA polymerase activity"/>
    <property type="evidence" value="ECO:0007669"/>
    <property type="project" value="UniProtKB-UniRule"/>
</dbReference>
<dbReference type="GO" id="GO:0006370">
    <property type="term" value="P:7-methylguanosine mRNA capping"/>
    <property type="evidence" value="ECO:0007669"/>
    <property type="project" value="UniProtKB-UniRule"/>
</dbReference>
<dbReference type="GO" id="GO:0075526">
    <property type="term" value="P:cap snatching"/>
    <property type="evidence" value="ECO:0007669"/>
    <property type="project" value="UniProtKB-UniRule"/>
</dbReference>
<dbReference type="GO" id="GO:0006351">
    <property type="term" value="P:DNA-templated transcription"/>
    <property type="evidence" value="ECO:0007669"/>
    <property type="project" value="UniProtKB-UniRule"/>
</dbReference>
<dbReference type="GO" id="GO:0039657">
    <property type="term" value="P:symbiont-mediated suppression of host gene expression"/>
    <property type="evidence" value="ECO:0007669"/>
    <property type="project" value="UniProtKB-KW"/>
</dbReference>
<dbReference type="GO" id="GO:0039523">
    <property type="term" value="P:symbiont-mediated suppression of host mRNA transcription via inhibition of RNA polymerase II activity"/>
    <property type="evidence" value="ECO:0007669"/>
    <property type="project" value="UniProtKB-UniRule"/>
</dbReference>
<dbReference type="GO" id="GO:0039694">
    <property type="term" value="P:viral RNA genome replication"/>
    <property type="evidence" value="ECO:0007669"/>
    <property type="project" value="InterPro"/>
</dbReference>
<dbReference type="FunFam" id="3.30.30.90:FF:000001">
    <property type="entry name" value="Polymerase basic protein 2"/>
    <property type="match status" value="1"/>
</dbReference>
<dbReference type="Gene3D" id="3.30.30.90">
    <property type="entry name" value="Polymerase Basic Protein 2, C-terminal domain"/>
    <property type="match status" value="1"/>
</dbReference>
<dbReference type="HAMAP" id="MF_04062">
    <property type="entry name" value="INV_PB2"/>
    <property type="match status" value="1"/>
</dbReference>
<dbReference type="InterPro" id="IPR049110">
    <property type="entry name" value="Flu_PB2_2nd"/>
</dbReference>
<dbReference type="InterPro" id="IPR049114">
    <property type="entry name" value="Flu_PB2_6th"/>
</dbReference>
<dbReference type="InterPro" id="IPR049115">
    <property type="entry name" value="Flu_PB2_C"/>
</dbReference>
<dbReference type="InterPro" id="IPR048298">
    <property type="entry name" value="Flu_PB2_CAP-bd"/>
</dbReference>
<dbReference type="InterPro" id="IPR049111">
    <property type="entry name" value="Flu_PB2_middle"/>
</dbReference>
<dbReference type="InterPro" id="IPR049106">
    <property type="entry name" value="Flu_PB2_N"/>
</dbReference>
<dbReference type="InterPro" id="IPR001591">
    <property type="entry name" value="INV_PB2"/>
</dbReference>
<dbReference type="InterPro" id="IPR049113">
    <property type="entry name" value="PB2_helical"/>
</dbReference>
<dbReference type="InterPro" id="IPR037258">
    <property type="entry name" value="PDB2_C"/>
</dbReference>
<dbReference type="Pfam" id="PF20947">
    <property type="entry name" value="Flu_PB2_1st"/>
    <property type="match status" value="1"/>
</dbReference>
<dbReference type="Pfam" id="PF20948">
    <property type="entry name" value="Flu_PB2_2nd"/>
    <property type="match status" value="1"/>
</dbReference>
<dbReference type="Pfam" id="PF20949">
    <property type="entry name" value="Flu_PB2_3rd"/>
    <property type="match status" value="1"/>
</dbReference>
<dbReference type="Pfam" id="PF20950">
    <property type="entry name" value="Flu_PB2_4th"/>
    <property type="match status" value="1"/>
</dbReference>
<dbReference type="Pfam" id="PF00604">
    <property type="entry name" value="Flu_PB2_5th"/>
    <property type="match status" value="1"/>
</dbReference>
<dbReference type="Pfam" id="PF20951">
    <property type="entry name" value="Flu_PB2_6th"/>
    <property type="match status" value="1"/>
</dbReference>
<dbReference type="Pfam" id="PF20952">
    <property type="entry name" value="Flu_PB2_7th"/>
    <property type="match status" value="1"/>
</dbReference>
<dbReference type="SUPFAM" id="SSF160453">
    <property type="entry name" value="PB2 C-terminal domain-like"/>
    <property type="match status" value="1"/>
</dbReference>
<accession>Q0A2D7</accession>
<feature type="chain" id="PRO_0000279648" description="Polymerase basic protein 2">
    <location>
        <begin position="1"/>
        <end position="759"/>
    </location>
</feature>
<feature type="short sequence motif" description="Nuclear localization signal" evidence="1">
    <location>
        <begin position="736"/>
        <end position="739"/>
    </location>
</feature>
<feature type="site" description="Avian adaptation" evidence="1">
    <location>
        <position position="627"/>
    </location>
</feature>
<proteinExistence type="inferred from homology"/>
<name>PB2_I66A0</name>
<keyword id="KW-1157">Cap snatching</keyword>
<keyword id="KW-1262">Eukaryotic host gene expression shutoff by virus</keyword>
<keyword id="KW-1191">Eukaryotic host transcription shutoff by virus</keyword>
<keyword id="KW-1190">Host gene expression shutoff by virus</keyword>
<keyword id="KW-1048">Host nucleus</keyword>
<keyword id="KW-0945">Host-virus interaction</keyword>
<keyword id="KW-1104">Inhibition of host RNA polymerase II by virus</keyword>
<keyword id="KW-0506">mRNA capping</keyword>
<keyword id="KW-0507">mRNA processing</keyword>
<keyword id="KW-1195">Viral transcription</keyword>
<keyword id="KW-0946">Virion</keyword>